<evidence type="ECO:0000255" key="1">
    <source>
        <dbReference type="HAMAP-Rule" id="MF_01708"/>
    </source>
</evidence>
<gene>
    <name evidence="1" type="primary">lolD</name>
    <name type="ordered locus">YPN_2005</name>
    <name type="ORF">YP516_2231</name>
</gene>
<organism>
    <name type="scientific">Yersinia pestis bv. Antiqua (strain Nepal516)</name>
    <dbReference type="NCBI Taxonomy" id="377628"/>
    <lineage>
        <taxon>Bacteria</taxon>
        <taxon>Pseudomonadati</taxon>
        <taxon>Pseudomonadota</taxon>
        <taxon>Gammaproteobacteria</taxon>
        <taxon>Enterobacterales</taxon>
        <taxon>Yersiniaceae</taxon>
        <taxon>Yersinia</taxon>
    </lineage>
</organism>
<sequence>MSNHPLLQCINLCKRYQEGQLHTDVLRNVSFAIEPGELMAIVGSSGSGKSTLLHLLGGLDSPTSGEVIYQGRSLNQLSSTAKAELRNRELGFIYQFHHLLPDFTALENVAMPLLIGGSKPAEAQEKAHEMLAAVGLEKRSKHRPSELSGGERQRVAIARSLVNNPSLVLADEPTGNLDQRNADSIFNLLGELNVRQGTAFLVVTHDLQLAKRMSRQLEMRDGQLQHHLTLVGAE</sequence>
<protein>
    <recommendedName>
        <fullName evidence="1">Lipoprotein-releasing system ATP-binding protein LolD</fullName>
        <ecNumber evidence="1">7.6.2.-</ecNumber>
    </recommendedName>
</protein>
<dbReference type="EC" id="7.6.2.-" evidence="1"/>
<dbReference type="EMBL" id="CP000305">
    <property type="protein sequence ID" value="ABG18334.1"/>
    <property type="molecule type" value="Genomic_DNA"/>
</dbReference>
<dbReference type="EMBL" id="ACNQ01000011">
    <property type="protein sequence ID" value="EEO76631.1"/>
    <property type="molecule type" value="Genomic_DNA"/>
</dbReference>
<dbReference type="RefSeq" id="WP_002210923.1">
    <property type="nucleotide sequence ID" value="NZ_ACNQ01000011.1"/>
</dbReference>
<dbReference type="SMR" id="Q1CI46"/>
<dbReference type="GeneID" id="57976946"/>
<dbReference type="KEGG" id="ypn:YPN_2005"/>
<dbReference type="HOGENOM" id="CLU_000604_1_22_6"/>
<dbReference type="Proteomes" id="UP000008936">
    <property type="component" value="Chromosome"/>
</dbReference>
<dbReference type="GO" id="GO:0005886">
    <property type="term" value="C:plasma membrane"/>
    <property type="evidence" value="ECO:0007669"/>
    <property type="project" value="UniProtKB-SubCell"/>
</dbReference>
<dbReference type="GO" id="GO:0005524">
    <property type="term" value="F:ATP binding"/>
    <property type="evidence" value="ECO:0007669"/>
    <property type="project" value="UniProtKB-KW"/>
</dbReference>
<dbReference type="GO" id="GO:0016887">
    <property type="term" value="F:ATP hydrolysis activity"/>
    <property type="evidence" value="ECO:0007669"/>
    <property type="project" value="InterPro"/>
</dbReference>
<dbReference type="GO" id="GO:0022857">
    <property type="term" value="F:transmembrane transporter activity"/>
    <property type="evidence" value="ECO:0007669"/>
    <property type="project" value="TreeGrafter"/>
</dbReference>
<dbReference type="GO" id="GO:0044874">
    <property type="term" value="P:lipoprotein localization to outer membrane"/>
    <property type="evidence" value="ECO:0007669"/>
    <property type="project" value="TreeGrafter"/>
</dbReference>
<dbReference type="GO" id="GO:0089705">
    <property type="term" value="P:protein localization to outer membrane"/>
    <property type="evidence" value="ECO:0007669"/>
    <property type="project" value="TreeGrafter"/>
</dbReference>
<dbReference type="CDD" id="cd03255">
    <property type="entry name" value="ABC_MJ0796_LolCDE_FtsE"/>
    <property type="match status" value="1"/>
</dbReference>
<dbReference type="FunFam" id="3.40.50.300:FF:000230">
    <property type="entry name" value="Lipoprotein-releasing system ATP-binding protein LolD"/>
    <property type="match status" value="1"/>
</dbReference>
<dbReference type="Gene3D" id="3.40.50.300">
    <property type="entry name" value="P-loop containing nucleotide triphosphate hydrolases"/>
    <property type="match status" value="1"/>
</dbReference>
<dbReference type="InterPro" id="IPR003593">
    <property type="entry name" value="AAA+_ATPase"/>
</dbReference>
<dbReference type="InterPro" id="IPR003439">
    <property type="entry name" value="ABC_transporter-like_ATP-bd"/>
</dbReference>
<dbReference type="InterPro" id="IPR017871">
    <property type="entry name" value="ABC_transporter-like_CS"/>
</dbReference>
<dbReference type="InterPro" id="IPR015854">
    <property type="entry name" value="ABC_transpr_LolD-like"/>
</dbReference>
<dbReference type="InterPro" id="IPR011924">
    <property type="entry name" value="LolD_lipo_ATP-bd"/>
</dbReference>
<dbReference type="InterPro" id="IPR017911">
    <property type="entry name" value="MacB-like_ATP-bd"/>
</dbReference>
<dbReference type="InterPro" id="IPR027417">
    <property type="entry name" value="P-loop_NTPase"/>
</dbReference>
<dbReference type="NCBIfam" id="TIGR02211">
    <property type="entry name" value="LolD_lipo_ex"/>
    <property type="match status" value="1"/>
</dbReference>
<dbReference type="NCBIfam" id="NF008639">
    <property type="entry name" value="PRK11629.1"/>
    <property type="match status" value="1"/>
</dbReference>
<dbReference type="PANTHER" id="PTHR24220">
    <property type="entry name" value="IMPORT ATP-BINDING PROTEIN"/>
    <property type="match status" value="1"/>
</dbReference>
<dbReference type="PANTHER" id="PTHR24220:SF689">
    <property type="entry name" value="LIPOPROTEIN-RELEASING SYSTEM ATP-BINDING PROTEIN LOLD"/>
    <property type="match status" value="1"/>
</dbReference>
<dbReference type="Pfam" id="PF00005">
    <property type="entry name" value="ABC_tran"/>
    <property type="match status" value="1"/>
</dbReference>
<dbReference type="SMART" id="SM00382">
    <property type="entry name" value="AAA"/>
    <property type="match status" value="1"/>
</dbReference>
<dbReference type="SUPFAM" id="SSF52540">
    <property type="entry name" value="P-loop containing nucleoside triphosphate hydrolases"/>
    <property type="match status" value="1"/>
</dbReference>
<dbReference type="PROSITE" id="PS00211">
    <property type="entry name" value="ABC_TRANSPORTER_1"/>
    <property type="match status" value="1"/>
</dbReference>
<dbReference type="PROSITE" id="PS50893">
    <property type="entry name" value="ABC_TRANSPORTER_2"/>
    <property type="match status" value="1"/>
</dbReference>
<dbReference type="PROSITE" id="PS51244">
    <property type="entry name" value="LOLD"/>
    <property type="match status" value="1"/>
</dbReference>
<keyword id="KW-0067">ATP-binding</keyword>
<keyword id="KW-0997">Cell inner membrane</keyword>
<keyword id="KW-1003">Cell membrane</keyword>
<keyword id="KW-0472">Membrane</keyword>
<keyword id="KW-0547">Nucleotide-binding</keyword>
<keyword id="KW-1278">Translocase</keyword>
<keyword id="KW-0813">Transport</keyword>
<reference key="1">
    <citation type="journal article" date="2006" name="J. Bacteriol.">
        <title>Complete genome sequence of Yersinia pestis strains Antiqua and Nepal516: evidence of gene reduction in an emerging pathogen.</title>
        <authorList>
            <person name="Chain P.S.G."/>
            <person name="Hu P."/>
            <person name="Malfatti S.A."/>
            <person name="Radnedge L."/>
            <person name="Larimer F."/>
            <person name="Vergez L.M."/>
            <person name="Worsham P."/>
            <person name="Chu M.C."/>
            <person name="Andersen G.L."/>
        </authorList>
    </citation>
    <scope>NUCLEOTIDE SEQUENCE [LARGE SCALE GENOMIC DNA]</scope>
    <source>
        <strain>Nepal516</strain>
    </source>
</reference>
<reference key="2">
    <citation type="submission" date="2009-04" db="EMBL/GenBank/DDBJ databases">
        <title>Yersinia pestis Nepal516A whole genome shotgun sequencing project.</title>
        <authorList>
            <person name="Plunkett G. III"/>
            <person name="Anderson B.D."/>
            <person name="Baumler D.J."/>
            <person name="Burland V."/>
            <person name="Cabot E.L."/>
            <person name="Glasner J.D."/>
            <person name="Mau B."/>
            <person name="Neeno-Eckwall E."/>
            <person name="Perna N.T."/>
            <person name="Munk A.C."/>
            <person name="Tapia R."/>
            <person name="Green L.D."/>
            <person name="Rogers Y.C."/>
            <person name="Detter J.C."/>
            <person name="Bruce D.C."/>
            <person name="Brettin T.S."/>
        </authorList>
    </citation>
    <scope>NUCLEOTIDE SEQUENCE [LARGE SCALE GENOMIC DNA]</scope>
    <source>
        <strain>Nepal516</strain>
    </source>
</reference>
<accession>Q1CI46</accession>
<accession>C4GTW7</accession>
<proteinExistence type="inferred from homology"/>
<name>LOLD_YERPN</name>
<comment type="function">
    <text evidence="1">Part of the ABC transporter complex LolCDE involved in the translocation of mature outer membrane-directed lipoproteins, from the inner membrane to the periplasmic chaperone, LolA. Responsible for the formation of the LolA-lipoprotein complex in an ATP-dependent manner.</text>
</comment>
<comment type="subunit">
    <text evidence="1">The complex is composed of two ATP-binding proteins (LolD) and two transmembrane proteins (LolC and LolE).</text>
</comment>
<comment type="subcellular location">
    <subcellularLocation>
        <location evidence="1">Cell inner membrane</location>
        <topology evidence="1">Peripheral membrane protein</topology>
    </subcellularLocation>
</comment>
<comment type="similarity">
    <text evidence="1">Belongs to the ABC transporter superfamily. Lipoprotein translocase (TC 3.A.1.125) family.</text>
</comment>
<feature type="chain" id="PRO_0000272170" description="Lipoprotein-releasing system ATP-binding protein LolD">
    <location>
        <begin position="1"/>
        <end position="234"/>
    </location>
</feature>
<feature type="domain" description="ABC transporter" evidence="1">
    <location>
        <begin position="7"/>
        <end position="233"/>
    </location>
</feature>
<feature type="binding site" evidence="1">
    <location>
        <begin position="43"/>
        <end position="50"/>
    </location>
    <ligand>
        <name>ATP</name>
        <dbReference type="ChEBI" id="CHEBI:30616"/>
    </ligand>
</feature>